<keyword id="KW-0963">Cytoplasm</keyword>
<keyword id="KW-0539">Nucleus</keyword>
<keyword id="KW-0653">Protein transport</keyword>
<keyword id="KW-1185">Reference proteome</keyword>
<keyword id="KW-0813">Transport</keyword>
<organism>
    <name type="scientific">Eremothecium gossypii (strain ATCC 10895 / CBS 109.51 / FGSC 9923 / NRRL Y-1056)</name>
    <name type="common">Yeast</name>
    <name type="synonym">Ashbya gossypii</name>
    <dbReference type="NCBI Taxonomy" id="284811"/>
    <lineage>
        <taxon>Eukaryota</taxon>
        <taxon>Fungi</taxon>
        <taxon>Dikarya</taxon>
        <taxon>Ascomycota</taxon>
        <taxon>Saccharomycotina</taxon>
        <taxon>Saccharomycetes</taxon>
        <taxon>Saccharomycetales</taxon>
        <taxon>Saccharomycetaceae</taxon>
        <taxon>Eremothecium</taxon>
    </lineage>
</organism>
<evidence type="ECO:0000250" key="1"/>
<evidence type="ECO:0000305" key="2"/>
<feature type="chain" id="PRO_0000409394" description="Tethering factor for nuclear proteasome STS1">
    <location>
        <begin position="1"/>
        <end position="320"/>
    </location>
</feature>
<name>STS1_EREGS</name>
<sequence>MSQSVGFEWGFKAGGEGRPRAQGDGAGCAGATAAANSQQGCGHLVHMSYKVGKPKMKRRLTNEEHGGARRAKRQPAQFNVIQGQPLPVHRKIEMMDKAALQLTLLQLVAMHPEVQDSLSVLQPTSPDPAKYTELLEQKMQAVYDHIPYSKSSDMLNDYAFVRMKAAILEFLNCLIDCLLDAIPPRTTNLLQSFKFLAYGTRLLAQMPHFETESNNYYKNICYEQVSEIWNTLIRHASSDINFLSTKPSLLHYLHELKQFNEQTKGKFDIPLRLFYTIMDDYHTQTVPAAAAVASTSATVAEELNGNSKSMETLGIWNNVA</sequence>
<gene>
    <name type="primary">STS1</name>
    <name type="ordered locus">AGR243W</name>
</gene>
<protein>
    <recommendedName>
        <fullName>Tethering factor for nuclear proteasome STS1</fullName>
    </recommendedName>
</protein>
<comment type="function">
    <text evidence="1">Involved in ubiquitin-mediated protein degradation. Regulatory factor in the ubiquitin/proteasome pathway that controls the turnover of proteasome substrates. Targets proteasomes to the nucleus and facilitates the degradation of nuclear proteins (By similarity).</text>
</comment>
<comment type="subunit">
    <text evidence="1">Binds the proteasome.</text>
</comment>
<comment type="subcellular location">
    <subcellularLocation>
        <location evidence="1">Cytoplasm</location>
    </subcellularLocation>
    <subcellularLocation>
        <location evidence="1">Nucleus</location>
    </subcellularLocation>
</comment>
<comment type="similarity">
    <text evidence="2">Belongs to the cut8/STS1 family.</text>
</comment>
<proteinExistence type="inferred from homology"/>
<dbReference type="EMBL" id="AE016820">
    <property type="protein sequence ID" value="AAS54733.2"/>
    <property type="molecule type" value="Genomic_DNA"/>
</dbReference>
<dbReference type="RefSeq" id="NP_986909.2">
    <property type="nucleotide sequence ID" value="NM_211971.2"/>
</dbReference>
<dbReference type="SMR" id="Q74ZG4"/>
<dbReference type="FunCoup" id="Q74ZG4">
    <property type="interactions" value="15"/>
</dbReference>
<dbReference type="STRING" id="284811.Q74ZG4"/>
<dbReference type="EnsemblFungi" id="AAS54733">
    <property type="protein sequence ID" value="AAS54733"/>
    <property type="gene ID" value="AGOS_AGR243W"/>
</dbReference>
<dbReference type="GeneID" id="4623211"/>
<dbReference type="KEGG" id="ago:AGOS_AGR243W"/>
<dbReference type="eggNOG" id="ENOG502RNK4">
    <property type="taxonomic scope" value="Eukaryota"/>
</dbReference>
<dbReference type="HOGENOM" id="CLU_054606_1_0_1"/>
<dbReference type="InParanoid" id="Q74ZG4"/>
<dbReference type="OMA" id="DYTPHFL"/>
<dbReference type="OrthoDB" id="10061064at2759"/>
<dbReference type="Proteomes" id="UP000000591">
    <property type="component" value="Chromosome VII"/>
</dbReference>
<dbReference type="GO" id="GO:0005737">
    <property type="term" value="C:cytoplasm"/>
    <property type="evidence" value="ECO:0007669"/>
    <property type="project" value="UniProtKB-SubCell"/>
</dbReference>
<dbReference type="GO" id="GO:0005634">
    <property type="term" value="C:nucleus"/>
    <property type="evidence" value="ECO:0007669"/>
    <property type="project" value="UniProtKB-SubCell"/>
</dbReference>
<dbReference type="GO" id="GO:0070628">
    <property type="term" value="F:proteasome binding"/>
    <property type="evidence" value="ECO:0000318"/>
    <property type="project" value="GO_Central"/>
</dbReference>
<dbReference type="GO" id="GO:0007059">
    <property type="term" value="P:chromosome segregation"/>
    <property type="evidence" value="ECO:0007669"/>
    <property type="project" value="EnsemblFungi"/>
</dbReference>
<dbReference type="GO" id="GO:0071630">
    <property type="term" value="P:nuclear protein quality control by the ubiquitin-proteasome system"/>
    <property type="evidence" value="ECO:0000318"/>
    <property type="project" value="GO_Central"/>
</dbReference>
<dbReference type="GO" id="GO:0031144">
    <property type="term" value="P:proteasome localization"/>
    <property type="evidence" value="ECO:0000318"/>
    <property type="project" value="GO_Central"/>
</dbReference>
<dbReference type="GO" id="GO:0015031">
    <property type="term" value="P:protein transport"/>
    <property type="evidence" value="ECO:0007669"/>
    <property type="project" value="UniProtKB-KW"/>
</dbReference>
<dbReference type="Gene3D" id="1.20.58.1590">
    <property type="entry name" value="Tethering factor for nuclear proteasome Cut8/Sts1"/>
    <property type="match status" value="1"/>
</dbReference>
<dbReference type="InterPro" id="IPR013868">
    <property type="entry name" value="Cut8/Sts1_fam"/>
</dbReference>
<dbReference type="InterPro" id="IPR038422">
    <property type="entry name" value="Cut8/Sts1_sf"/>
</dbReference>
<dbReference type="PANTHER" id="PTHR28032">
    <property type="entry name" value="FI02826P"/>
    <property type="match status" value="1"/>
</dbReference>
<dbReference type="PANTHER" id="PTHR28032:SF1">
    <property type="entry name" value="FI02826P"/>
    <property type="match status" value="1"/>
</dbReference>
<dbReference type="Pfam" id="PF08559">
    <property type="entry name" value="Cut8"/>
    <property type="match status" value="1"/>
</dbReference>
<accession>Q74ZG4</accession>
<reference key="1">
    <citation type="journal article" date="2004" name="Science">
        <title>The Ashbya gossypii genome as a tool for mapping the ancient Saccharomyces cerevisiae genome.</title>
        <authorList>
            <person name="Dietrich F.S."/>
            <person name="Voegeli S."/>
            <person name="Brachat S."/>
            <person name="Lerch A."/>
            <person name="Gates K."/>
            <person name="Steiner S."/>
            <person name="Mohr C."/>
            <person name="Poehlmann R."/>
            <person name="Luedi P."/>
            <person name="Choi S."/>
            <person name="Wing R.A."/>
            <person name="Flavier A."/>
            <person name="Gaffney T.D."/>
            <person name="Philippsen P."/>
        </authorList>
    </citation>
    <scope>NUCLEOTIDE SEQUENCE [LARGE SCALE GENOMIC DNA]</scope>
    <source>
        <strain>ATCC 10895 / CBS 109.51 / FGSC 9923 / NRRL Y-1056</strain>
    </source>
</reference>
<reference key="2">
    <citation type="journal article" date="2013" name="G3 (Bethesda)">
        <title>Genomes of Ashbya fungi isolated from insects reveal four mating-type loci, numerous translocations, lack of transposons, and distinct gene duplications.</title>
        <authorList>
            <person name="Dietrich F.S."/>
            <person name="Voegeli S."/>
            <person name="Kuo S."/>
            <person name="Philippsen P."/>
        </authorList>
    </citation>
    <scope>GENOME REANNOTATION</scope>
    <source>
        <strain>ATCC 10895 / CBS 109.51 / FGSC 9923 / NRRL Y-1056</strain>
    </source>
</reference>